<name>RSGA_HAEIG</name>
<reference key="1">
    <citation type="journal article" date="2007" name="Genome Biol.">
        <title>Characterization and modeling of the Haemophilus influenzae core and supragenomes based on the complete genomic sequences of Rd and 12 clinical nontypeable strains.</title>
        <authorList>
            <person name="Hogg J.S."/>
            <person name="Hu F.Z."/>
            <person name="Janto B."/>
            <person name="Boissy R."/>
            <person name="Hayes J."/>
            <person name="Keefe R."/>
            <person name="Post J.C."/>
            <person name="Ehrlich G.D."/>
        </authorList>
    </citation>
    <scope>NUCLEOTIDE SEQUENCE [LARGE SCALE GENOMIC DNA]</scope>
    <source>
        <strain>PittGG</strain>
    </source>
</reference>
<evidence type="ECO:0000255" key="1">
    <source>
        <dbReference type="HAMAP-Rule" id="MF_01820"/>
    </source>
</evidence>
<evidence type="ECO:0000255" key="2">
    <source>
        <dbReference type="PROSITE-ProRule" id="PRU01058"/>
    </source>
</evidence>
<evidence type="ECO:0000256" key="3">
    <source>
        <dbReference type="SAM" id="MobiDB-lite"/>
    </source>
</evidence>
<sequence length="346" mass="38971">MAKRKLTQNQTRRIQSNNAKTLHRHKKKDIEWSDEMLGESQEGVVVTRYSIHADVENEQGEIYRCNLRRTLSSLVVGDKVVWRKGNEQLQGVSGVIEAIHPRENEISRPDYYDGLKPIAANIDRIIIVSAVLPTLSLNIIDRYLVVCEIAEIKPLIVLNKVDLLAQEQRQEIEDQLKIYQDIGYEILMISAKSGENMEKLTALLAQGTAIFVGQSGVGKSSLINHILPSVNAQVGDVSETSGLGQHTTTSSRLYHLPQGGNLIDSPGIREFGLWHLDAEQITKGYREFQYVLGTCKFRDCKHLSDPGCALREAVEQGKISPVRYDNYHRLIESLSETKSQRHFSLV</sequence>
<protein>
    <recommendedName>
        <fullName evidence="1">Small ribosomal subunit biogenesis GTPase RsgA</fullName>
        <ecNumber evidence="1">3.6.1.-</ecNumber>
    </recommendedName>
</protein>
<comment type="function">
    <text evidence="1">One of several proteins that assist in the late maturation steps of the functional core of the 30S ribosomal subunit. Helps release RbfA from mature subunits. May play a role in the assembly of ribosomal proteins into the subunit. Circularly permuted GTPase that catalyzes slow GTP hydrolysis, GTPase activity is stimulated by the 30S ribosomal subunit.</text>
</comment>
<comment type="cofactor">
    <cofactor evidence="1">
        <name>Zn(2+)</name>
        <dbReference type="ChEBI" id="CHEBI:29105"/>
    </cofactor>
    <text evidence="1">Binds 1 zinc ion per subunit.</text>
</comment>
<comment type="subunit">
    <text evidence="1">Monomer. Associates with 30S ribosomal subunit, binds 16S rRNA.</text>
</comment>
<comment type="subcellular location">
    <subcellularLocation>
        <location evidence="1">Cytoplasm</location>
    </subcellularLocation>
</comment>
<comment type="similarity">
    <text evidence="1">Belongs to the TRAFAC class YlqF/YawG GTPase family. RsgA subfamily.</text>
</comment>
<feature type="chain" id="PRO_1000188084" description="Small ribosomal subunit biogenesis GTPase RsgA">
    <location>
        <begin position="1"/>
        <end position="346"/>
    </location>
</feature>
<feature type="domain" description="CP-type G" evidence="2">
    <location>
        <begin position="103"/>
        <end position="271"/>
    </location>
</feature>
<feature type="region of interest" description="Disordered" evidence="3">
    <location>
        <begin position="1"/>
        <end position="26"/>
    </location>
</feature>
<feature type="compositionally biased region" description="Polar residues" evidence="3">
    <location>
        <begin position="7"/>
        <end position="20"/>
    </location>
</feature>
<feature type="binding site" evidence="1">
    <location>
        <begin position="159"/>
        <end position="162"/>
    </location>
    <ligand>
        <name>GTP</name>
        <dbReference type="ChEBI" id="CHEBI:37565"/>
    </ligand>
</feature>
<feature type="binding site" evidence="1">
    <location>
        <begin position="213"/>
        <end position="221"/>
    </location>
    <ligand>
        <name>GTP</name>
        <dbReference type="ChEBI" id="CHEBI:37565"/>
    </ligand>
</feature>
<feature type="binding site" evidence="1">
    <location>
        <position position="295"/>
    </location>
    <ligand>
        <name>Zn(2+)</name>
        <dbReference type="ChEBI" id="CHEBI:29105"/>
    </ligand>
</feature>
<feature type="binding site" evidence="1">
    <location>
        <position position="300"/>
    </location>
    <ligand>
        <name>Zn(2+)</name>
        <dbReference type="ChEBI" id="CHEBI:29105"/>
    </ligand>
</feature>
<feature type="binding site" evidence="1">
    <location>
        <position position="302"/>
    </location>
    <ligand>
        <name>Zn(2+)</name>
        <dbReference type="ChEBI" id="CHEBI:29105"/>
    </ligand>
</feature>
<feature type="binding site" evidence="1">
    <location>
        <position position="308"/>
    </location>
    <ligand>
        <name>Zn(2+)</name>
        <dbReference type="ChEBI" id="CHEBI:29105"/>
    </ligand>
</feature>
<accession>A5UFF1</accession>
<gene>
    <name evidence="1" type="primary">rsgA</name>
    <name type="ordered locus">CGSHiGG_02320</name>
</gene>
<organism>
    <name type="scientific">Haemophilus influenzae (strain PittGG)</name>
    <dbReference type="NCBI Taxonomy" id="374931"/>
    <lineage>
        <taxon>Bacteria</taxon>
        <taxon>Pseudomonadati</taxon>
        <taxon>Pseudomonadota</taxon>
        <taxon>Gammaproteobacteria</taxon>
        <taxon>Pasteurellales</taxon>
        <taxon>Pasteurellaceae</taxon>
        <taxon>Haemophilus</taxon>
    </lineage>
</organism>
<proteinExistence type="inferred from homology"/>
<keyword id="KW-0963">Cytoplasm</keyword>
<keyword id="KW-0342">GTP-binding</keyword>
<keyword id="KW-0378">Hydrolase</keyword>
<keyword id="KW-0479">Metal-binding</keyword>
<keyword id="KW-0547">Nucleotide-binding</keyword>
<keyword id="KW-0690">Ribosome biogenesis</keyword>
<keyword id="KW-0694">RNA-binding</keyword>
<keyword id="KW-0699">rRNA-binding</keyword>
<keyword id="KW-0862">Zinc</keyword>
<dbReference type="EC" id="3.6.1.-" evidence="1"/>
<dbReference type="EMBL" id="CP000672">
    <property type="protein sequence ID" value="ABQ99506.1"/>
    <property type="molecule type" value="Genomic_DNA"/>
</dbReference>
<dbReference type="SMR" id="A5UFF1"/>
<dbReference type="KEGG" id="hiq:CGSHiGG_02320"/>
<dbReference type="HOGENOM" id="CLU_033617_2_0_6"/>
<dbReference type="Proteomes" id="UP000001990">
    <property type="component" value="Chromosome"/>
</dbReference>
<dbReference type="GO" id="GO:0005737">
    <property type="term" value="C:cytoplasm"/>
    <property type="evidence" value="ECO:0007669"/>
    <property type="project" value="UniProtKB-SubCell"/>
</dbReference>
<dbReference type="GO" id="GO:0005525">
    <property type="term" value="F:GTP binding"/>
    <property type="evidence" value="ECO:0007669"/>
    <property type="project" value="UniProtKB-UniRule"/>
</dbReference>
<dbReference type="GO" id="GO:0003924">
    <property type="term" value="F:GTPase activity"/>
    <property type="evidence" value="ECO:0007669"/>
    <property type="project" value="UniProtKB-UniRule"/>
</dbReference>
<dbReference type="GO" id="GO:0046872">
    <property type="term" value="F:metal ion binding"/>
    <property type="evidence" value="ECO:0007669"/>
    <property type="project" value="UniProtKB-KW"/>
</dbReference>
<dbReference type="GO" id="GO:0019843">
    <property type="term" value="F:rRNA binding"/>
    <property type="evidence" value="ECO:0007669"/>
    <property type="project" value="UniProtKB-KW"/>
</dbReference>
<dbReference type="GO" id="GO:0042274">
    <property type="term" value="P:ribosomal small subunit biogenesis"/>
    <property type="evidence" value="ECO:0007669"/>
    <property type="project" value="UniProtKB-UniRule"/>
</dbReference>
<dbReference type="CDD" id="cd01854">
    <property type="entry name" value="YjeQ_EngC"/>
    <property type="match status" value="1"/>
</dbReference>
<dbReference type="Gene3D" id="2.40.50.140">
    <property type="entry name" value="Nucleic acid-binding proteins"/>
    <property type="match status" value="1"/>
</dbReference>
<dbReference type="Gene3D" id="3.40.50.300">
    <property type="entry name" value="P-loop containing nucleotide triphosphate hydrolases"/>
    <property type="match status" value="1"/>
</dbReference>
<dbReference type="Gene3D" id="1.10.40.50">
    <property type="entry name" value="Probable gtpase engc, domain 3"/>
    <property type="match status" value="1"/>
</dbReference>
<dbReference type="HAMAP" id="MF_01820">
    <property type="entry name" value="GTPase_RsgA"/>
    <property type="match status" value="1"/>
</dbReference>
<dbReference type="InterPro" id="IPR030378">
    <property type="entry name" value="G_CP_dom"/>
</dbReference>
<dbReference type="InterPro" id="IPR012340">
    <property type="entry name" value="NA-bd_OB-fold"/>
</dbReference>
<dbReference type="InterPro" id="IPR027417">
    <property type="entry name" value="P-loop_NTPase"/>
</dbReference>
<dbReference type="InterPro" id="IPR004881">
    <property type="entry name" value="Ribosome_biogen_GTPase_RsgA"/>
</dbReference>
<dbReference type="InterPro" id="IPR010914">
    <property type="entry name" value="RsgA_GTPase_dom"/>
</dbReference>
<dbReference type="NCBIfam" id="NF008931">
    <property type="entry name" value="PRK12288.1"/>
    <property type="match status" value="1"/>
</dbReference>
<dbReference type="NCBIfam" id="TIGR00157">
    <property type="entry name" value="ribosome small subunit-dependent GTPase A"/>
    <property type="match status" value="1"/>
</dbReference>
<dbReference type="PANTHER" id="PTHR32120">
    <property type="entry name" value="SMALL RIBOSOMAL SUBUNIT BIOGENESIS GTPASE RSGA"/>
    <property type="match status" value="1"/>
</dbReference>
<dbReference type="PANTHER" id="PTHR32120:SF11">
    <property type="entry name" value="SMALL RIBOSOMAL SUBUNIT BIOGENESIS GTPASE RSGA 1, MITOCHONDRIAL-RELATED"/>
    <property type="match status" value="1"/>
</dbReference>
<dbReference type="Pfam" id="PF03193">
    <property type="entry name" value="RsgA_GTPase"/>
    <property type="match status" value="1"/>
</dbReference>
<dbReference type="SUPFAM" id="SSF52540">
    <property type="entry name" value="P-loop containing nucleoside triphosphate hydrolases"/>
    <property type="match status" value="1"/>
</dbReference>
<dbReference type="PROSITE" id="PS50936">
    <property type="entry name" value="ENGC_GTPASE"/>
    <property type="match status" value="1"/>
</dbReference>
<dbReference type="PROSITE" id="PS51721">
    <property type="entry name" value="G_CP"/>
    <property type="match status" value="1"/>
</dbReference>